<protein>
    <recommendedName>
        <fullName evidence="1">Large ribosomal subunit protein uL22</fullName>
    </recommendedName>
    <alternativeName>
        <fullName evidence="3">50S ribosomal protein L22</fullName>
    </alternativeName>
</protein>
<accession>P9WHC1</accession>
<accession>L0T4G9</accession>
<accession>O08119</accession>
<accession>P61181</accession>
<accession>P95054</accession>
<name>RL22_MYCTU</name>
<feature type="initiator methionine" description="Removed" evidence="4">
    <location>
        <position position="1"/>
    </location>
</feature>
<feature type="chain" id="PRO_0000125187" description="Large ribosomal subunit protein uL22">
    <location>
        <begin position="2"/>
        <end position="197"/>
    </location>
</feature>
<feature type="region of interest" description="Disordered" evidence="2">
    <location>
        <begin position="118"/>
        <end position="197"/>
    </location>
</feature>
<feature type="compositionally biased region" description="Low complexity" evidence="2">
    <location>
        <begin position="149"/>
        <end position="165"/>
    </location>
</feature>
<feature type="compositionally biased region" description="Basic residues" evidence="2">
    <location>
        <begin position="172"/>
        <end position="183"/>
    </location>
</feature>
<feature type="compositionally biased region" description="Low complexity" evidence="2">
    <location>
        <begin position="184"/>
        <end position="197"/>
    </location>
</feature>
<feature type="modified residue" description="N-acetylthreonine" evidence="4">
    <location>
        <position position="2"/>
    </location>
</feature>
<gene>
    <name evidence="1" type="primary">rplV</name>
    <name type="ordered locus">Rv0706</name>
    <name type="ORF">MTCY210.25</name>
</gene>
<reference key="1">
    <citation type="journal article" date="1998" name="Nature">
        <title>Deciphering the biology of Mycobacterium tuberculosis from the complete genome sequence.</title>
        <authorList>
            <person name="Cole S.T."/>
            <person name="Brosch R."/>
            <person name="Parkhill J."/>
            <person name="Garnier T."/>
            <person name="Churcher C.M."/>
            <person name="Harris D.E."/>
            <person name="Gordon S.V."/>
            <person name="Eiglmeier K."/>
            <person name="Gas S."/>
            <person name="Barry C.E. III"/>
            <person name="Tekaia F."/>
            <person name="Badcock K."/>
            <person name="Basham D."/>
            <person name="Brown D."/>
            <person name="Chillingworth T."/>
            <person name="Connor R."/>
            <person name="Davies R.M."/>
            <person name="Devlin K."/>
            <person name="Feltwell T."/>
            <person name="Gentles S."/>
            <person name="Hamlin N."/>
            <person name="Holroyd S."/>
            <person name="Hornsby T."/>
            <person name="Jagels K."/>
            <person name="Krogh A."/>
            <person name="McLean J."/>
            <person name="Moule S."/>
            <person name="Murphy L.D."/>
            <person name="Oliver S."/>
            <person name="Osborne J."/>
            <person name="Quail M.A."/>
            <person name="Rajandream M.A."/>
            <person name="Rogers J."/>
            <person name="Rutter S."/>
            <person name="Seeger K."/>
            <person name="Skelton S."/>
            <person name="Squares S."/>
            <person name="Squares R."/>
            <person name="Sulston J.E."/>
            <person name="Taylor K."/>
            <person name="Whitehead S."/>
            <person name="Barrell B.G."/>
        </authorList>
    </citation>
    <scope>NUCLEOTIDE SEQUENCE [LARGE SCALE GENOMIC DNA]</scope>
    <source>
        <strain>ATCC 25618 / H37Rv</strain>
    </source>
</reference>
<reference key="2">
    <citation type="journal article" date="2008" name="BMC Syst. Biol.">
        <title>targetTB: a target identification pipeline for Mycobacterium tuberculosis through an interactome, reactome and genome-scale structural analysis.</title>
        <authorList>
            <person name="Raman K."/>
            <person name="Yeturu K."/>
            <person name="Chandra N."/>
        </authorList>
    </citation>
    <scope>IDENTIFICATION AS A DRUG TARGET [LARGE SCALE ANALYSIS]</scope>
</reference>
<reference key="3">
    <citation type="journal article" date="2011" name="Mol. Cell. Proteomics">
        <title>Proteogenomic analysis of Mycobacterium tuberculosis by high resolution mass spectrometry.</title>
        <authorList>
            <person name="Kelkar D.S."/>
            <person name="Kumar D."/>
            <person name="Kumar P."/>
            <person name="Balakrishnan L."/>
            <person name="Muthusamy B."/>
            <person name="Yadav A.K."/>
            <person name="Shrivastava P."/>
            <person name="Marimuthu A."/>
            <person name="Anand S."/>
            <person name="Sundaram H."/>
            <person name="Kingsbury R."/>
            <person name="Harsha H.C."/>
            <person name="Nair B."/>
            <person name="Prasad T.S."/>
            <person name="Chauhan D.S."/>
            <person name="Katoch K."/>
            <person name="Katoch V.M."/>
            <person name="Kumar P."/>
            <person name="Chaerkady R."/>
            <person name="Ramachandran S."/>
            <person name="Dash D."/>
            <person name="Pandey A."/>
        </authorList>
    </citation>
    <scope>ACETYLATION [LARGE SCALE ANALYSIS] AT THR-2</scope>
    <scope>CLEAVAGE OF INITIATOR METHIONINE [LARGE SCALE ANALYSIS]</scope>
    <scope>IDENTIFICATION BY MASS SPECTROMETRY [LARGE SCALE ANALYSIS]</scope>
    <source>
        <strain>ATCC 25618 / H37Rv</strain>
    </source>
</reference>
<keyword id="KW-0002">3D-structure</keyword>
<keyword id="KW-0007">Acetylation</keyword>
<keyword id="KW-1185">Reference proteome</keyword>
<keyword id="KW-0687">Ribonucleoprotein</keyword>
<keyword id="KW-0689">Ribosomal protein</keyword>
<keyword id="KW-0694">RNA-binding</keyword>
<keyword id="KW-0699">rRNA-binding</keyword>
<evidence type="ECO:0000255" key="1">
    <source>
        <dbReference type="HAMAP-Rule" id="MF_01331"/>
    </source>
</evidence>
<evidence type="ECO:0000256" key="2">
    <source>
        <dbReference type="SAM" id="MobiDB-lite"/>
    </source>
</evidence>
<evidence type="ECO:0000305" key="3"/>
<evidence type="ECO:0007744" key="4">
    <source>
    </source>
</evidence>
<proteinExistence type="evidence at protein level"/>
<comment type="function">
    <text evidence="1">This protein binds specifically to 23S rRNA; its binding is stimulated by other ribosomal proteins, e.g. L4, L17, and L20. It is important during the early stages of 50S assembly. It makes multiple contacts with different domains of the 23S rRNA in the assembled 50S subunit and ribosome (By similarity).</text>
</comment>
<comment type="function">
    <text evidence="1">The globular domain of the protein is located near the polypeptide exit tunnel on the outside of the subunit, while an extended beta-hairpin is found that lines the wall of the exit tunnel in the center of the 70S ribosome.</text>
</comment>
<comment type="subunit">
    <text evidence="1">Part of the 50S ribosomal subunit.</text>
</comment>
<comment type="miscellaneous">
    <text>Was identified as a high-confidence drug target.</text>
</comment>
<comment type="similarity">
    <text evidence="1">Belongs to the universal ribosomal protein uL22 family.</text>
</comment>
<organism>
    <name type="scientific">Mycobacterium tuberculosis (strain ATCC 25618 / H37Rv)</name>
    <dbReference type="NCBI Taxonomy" id="83332"/>
    <lineage>
        <taxon>Bacteria</taxon>
        <taxon>Bacillati</taxon>
        <taxon>Actinomycetota</taxon>
        <taxon>Actinomycetes</taxon>
        <taxon>Mycobacteriales</taxon>
        <taxon>Mycobacteriaceae</taxon>
        <taxon>Mycobacterium</taxon>
        <taxon>Mycobacterium tuberculosis complex</taxon>
    </lineage>
</organism>
<dbReference type="EMBL" id="AL123456">
    <property type="protein sequence ID" value="CCP43450.1"/>
    <property type="molecule type" value="Genomic_DNA"/>
</dbReference>
<dbReference type="PIR" id="E70642">
    <property type="entry name" value="E70642"/>
</dbReference>
<dbReference type="RefSeq" id="NP_215220.1">
    <property type="nucleotide sequence ID" value="NC_000962.3"/>
</dbReference>
<dbReference type="RefSeq" id="WP_003403587.1">
    <property type="nucleotide sequence ID" value="NZ_NVQJ01000007.1"/>
</dbReference>
<dbReference type="PDB" id="5V7Q">
    <property type="method" value="EM"/>
    <property type="resolution" value="3.70 A"/>
    <property type="chains" value="S=1-197"/>
</dbReference>
<dbReference type="PDB" id="5V93">
    <property type="method" value="EM"/>
    <property type="resolution" value="4.00 A"/>
    <property type="chains" value="S=1-197"/>
</dbReference>
<dbReference type="PDB" id="7KGB">
    <property type="method" value="EM"/>
    <property type="resolution" value="2.70 A"/>
    <property type="chains" value="S=1-197"/>
</dbReference>
<dbReference type="PDB" id="7MSC">
    <property type="method" value="EM"/>
    <property type="resolution" value="2.97 A"/>
    <property type="chains" value="S=1-197"/>
</dbReference>
<dbReference type="PDB" id="7MSH">
    <property type="method" value="EM"/>
    <property type="resolution" value="3.23 A"/>
    <property type="chains" value="S=1-197"/>
</dbReference>
<dbReference type="PDB" id="7MSM">
    <property type="method" value="EM"/>
    <property type="resolution" value="2.79 A"/>
    <property type="chains" value="S=1-197"/>
</dbReference>
<dbReference type="PDB" id="7MSZ">
    <property type="method" value="EM"/>
    <property type="resolution" value="3.10 A"/>
    <property type="chains" value="S=1-197"/>
</dbReference>
<dbReference type="PDB" id="7MT2">
    <property type="method" value="EM"/>
    <property type="resolution" value="2.76 A"/>
    <property type="chains" value="S=1-197"/>
</dbReference>
<dbReference type="PDB" id="7MT3">
    <property type="method" value="EM"/>
    <property type="resolution" value="2.80 A"/>
    <property type="chains" value="S=1-197"/>
</dbReference>
<dbReference type="PDB" id="7MT7">
    <property type="method" value="EM"/>
    <property type="resolution" value="2.71 A"/>
    <property type="chains" value="S=1-197"/>
</dbReference>
<dbReference type="PDB" id="7SFR">
    <property type="method" value="EM"/>
    <property type="resolution" value="2.60 A"/>
    <property type="chains" value="S=1-197"/>
</dbReference>
<dbReference type="PDBsum" id="5V7Q"/>
<dbReference type="PDBsum" id="5V93"/>
<dbReference type="PDBsum" id="7KGB"/>
<dbReference type="PDBsum" id="7MSC"/>
<dbReference type="PDBsum" id="7MSH"/>
<dbReference type="PDBsum" id="7MSM"/>
<dbReference type="PDBsum" id="7MSZ"/>
<dbReference type="PDBsum" id="7MT2"/>
<dbReference type="PDBsum" id="7MT3"/>
<dbReference type="PDBsum" id="7MT7"/>
<dbReference type="PDBsum" id="7SFR"/>
<dbReference type="EMDB" id="EMD-22865"/>
<dbReference type="EMDB" id="EMD-23961"/>
<dbReference type="EMDB" id="EMD-23962"/>
<dbReference type="EMDB" id="EMD-23969"/>
<dbReference type="EMDB" id="EMD-23972"/>
<dbReference type="EMDB" id="EMD-23974"/>
<dbReference type="EMDB" id="EMD-23975"/>
<dbReference type="EMDB" id="EMD-23976"/>
<dbReference type="EMDB" id="EMD-8645"/>
<dbReference type="SMR" id="P9WHC1"/>
<dbReference type="FunCoup" id="P9WHC1">
    <property type="interactions" value="149"/>
</dbReference>
<dbReference type="STRING" id="83332.Rv0706"/>
<dbReference type="iPTMnet" id="P9WHC1"/>
<dbReference type="PaxDb" id="83332-Rv0706"/>
<dbReference type="DNASU" id="888359"/>
<dbReference type="GeneID" id="888359"/>
<dbReference type="KEGG" id="mtu:Rv0706"/>
<dbReference type="KEGG" id="mtv:RVBD_0706"/>
<dbReference type="TubercuList" id="Rv0706"/>
<dbReference type="eggNOG" id="COG0091">
    <property type="taxonomic scope" value="Bacteria"/>
</dbReference>
<dbReference type="InParanoid" id="P9WHC1"/>
<dbReference type="OrthoDB" id="9805969at2"/>
<dbReference type="PhylomeDB" id="P9WHC1"/>
<dbReference type="PRO" id="PR:P9WHC1"/>
<dbReference type="Proteomes" id="UP000001584">
    <property type="component" value="Chromosome"/>
</dbReference>
<dbReference type="GO" id="GO:0022625">
    <property type="term" value="C:cytosolic large ribosomal subunit"/>
    <property type="evidence" value="ECO:0000318"/>
    <property type="project" value="GO_Central"/>
</dbReference>
<dbReference type="GO" id="GO:0009274">
    <property type="term" value="C:peptidoglycan-based cell wall"/>
    <property type="evidence" value="ECO:0007005"/>
    <property type="project" value="MTBBASE"/>
</dbReference>
<dbReference type="GO" id="GO:0019843">
    <property type="term" value="F:rRNA binding"/>
    <property type="evidence" value="ECO:0007669"/>
    <property type="project" value="UniProtKB-UniRule"/>
</dbReference>
<dbReference type="GO" id="GO:0003735">
    <property type="term" value="F:structural constituent of ribosome"/>
    <property type="evidence" value="ECO:0000318"/>
    <property type="project" value="GO_Central"/>
</dbReference>
<dbReference type="GO" id="GO:0006412">
    <property type="term" value="P:translation"/>
    <property type="evidence" value="ECO:0000318"/>
    <property type="project" value="GO_Central"/>
</dbReference>
<dbReference type="CDD" id="cd00336">
    <property type="entry name" value="Ribosomal_L22"/>
    <property type="match status" value="1"/>
</dbReference>
<dbReference type="FunFam" id="3.90.470.10:FF:000002">
    <property type="entry name" value="50S ribosomal protein L22"/>
    <property type="match status" value="1"/>
</dbReference>
<dbReference type="Gene3D" id="3.90.470.10">
    <property type="entry name" value="Ribosomal protein L22/L17"/>
    <property type="match status" value="1"/>
</dbReference>
<dbReference type="HAMAP" id="MF_01331_B">
    <property type="entry name" value="Ribosomal_uL22_B"/>
    <property type="match status" value="1"/>
</dbReference>
<dbReference type="InterPro" id="IPR001063">
    <property type="entry name" value="Ribosomal_uL22"/>
</dbReference>
<dbReference type="InterPro" id="IPR005727">
    <property type="entry name" value="Ribosomal_uL22_bac/chlpt-type"/>
</dbReference>
<dbReference type="InterPro" id="IPR047867">
    <property type="entry name" value="Ribosomal_uL22_bac/org-type"/>
</dbReference>
<dbReference type="InterPro" id="IPR018260">
    <property type="entry name" value="Ribosomal_uL22_CS"/>
</dbReference>
<dbReference type="InterPro" id="IPR036394">
    <property type="entry name" value="Ribosomal_uL22_sf"/>
</dbReference>
<dbReference type="NCBIfam" id="TIGR01044">
    <property type="entry name" value="rplV_bact"/>
    <property type="match status" value="1"/>
</dbReference>
<dbReference type="PANTHER" id="PTHR13501">
    <property type="entry name" value="CHLOROPLAST 50S RIBOSOMAL PROTEIN L22-RELATED"/>
    <property type="match status" value="1"/>
</dbReference>
<dbReference type="PANTHER" id="PTHR13501:SF8">
    <property type="entry name" value="LARGE RIBOSOMAL SUBUNIT PROTEIN UL22M"/>
    <property type="match status" value="1"/>
</dbReference>
<dbReference type="Pfam" id="PF00237">
    <property type="entry name" value="Ribosomal_L22"/>
    <property type="match status" value="1"/>
</dbReference>
<dbReference type="SUPFAM" id="SSF54843">
    <property type="entry name" value="Ribosomal protein L22"/>
    <property type="match status" value="1"/>
</dbReference>
<dbReference type="PROSITE" id="PS00464">
    <property type="entry name" value="RIBOSOMAL_L22"/>
    <property type="match status" value="1"/>
</dbReference>
<sequence length="197" mass="20380">MTAATKATEYPSAVAKARFVRVSPRKARRVIDLVRGRSVSDALDILRWAPQAASGPVAKVIASAAANAQNNGGLDPATLVVATVYADQGPTAKRIRPRAQGRAFRIRRRTSHITVVVESRPAKDQRSAKSSRARRTEASKAASKVGATAPAKKAAAKAPAKKAPASSGVKKTPAKKAPAKKAPAKASETSAAKGGSD</sequence>